<accession>P14877</accession>
<gene>
    <name type="primary">cpcB3</name>
</gene>
<feature type="chain" id="PRO_0000199147" description="C-phycocyanin-3 beta subunit">
    <location>
        <begin position="1"/>
        <end position="173"/>
    </location>
</feature>
<feature type="binding site" description="covalent" evidence="2">
    <location>
        <position position="83"/>
    </location>
    <ligand>
        <name>(2R,3E)-phycocyanobilin</name>
        <dbReference type="ChEBI" id="CHEBI:85275"/>
        <label>1</label>
    </ligand>
</feature>
<feature type="binding site" description="covalent" evidence="2">
    <location>
        <position position="154"/>
    </location>
    <ligand>
        <name>(2R,3E)-phycocyanobilin</name>
        <dbReference type="ChEBI" id="CHEBI:85275"/>
        <label>2</label>
    </ligand>
</feature>
<feature type="modified residue" description="N4-methylasparagine" evidence="2">
    <location>
        <position position="73"/>
    </location>
</feature>
<sequence length="173" mass="18237">MVQDAFSKVVSQADARGEYLSDGQLDALINLVKEGNKRVDVVNRISSNASSIVRNAARSLFAEQPQLIAPGGNAYTSRRAAACVRDLEIILRYVTYAIFAGDASVLDDRALNGLRETYLALGTPGASVAVGIQKLKESSIAIANDPNGITRGDCSSLIAEVSGYFDRAAAAVA</sequence>
<organism>
    <name type="scientific">Microchaete diplosiphon</name>
    <name type="common">Fremyella diplosiphon</name>
    <dbReference type="NCBI Taxonomy" id="1197"/>
    <lineage>
        <taxon>Bacteria</taxon>
        <taxon>Bacillati</taxon>
        <taxon>Cyanobacteriota</taxon>
        <taxon>Cyanophyceae</taxon>
        <taxon>Nostocales</taxon>
        <taxon>Rivulariaceae</taxon>
        <taxon>Microchaete</taxon>
    </lineage>
</organism>
<proteinExistence type="evidence at transcript level"/>
<keyword id="KW-0042">Antenna complex</keyword>
<keyword id="KW-0089">Bile pigment</keyword>
<keyword id="KW-0157">Chromophore</keyword>
<keyword id="KW-0249">Electron transport</keyword>
<keyword id="KW-0472">Membrane</keyword>
<keyword id="KW-0488">Methylation</keyword>
<keyword id="KW-0602">Photosynthesis</keyword>
<keyword id="KW-0605">Phycobilisome</keyword>
<keyword id="KW-0793">Thylakoid</keyword>
<keyword id="KW-0813">Transport</keyword>
<reference key="1">
    <citation type="journal article" date="1988" name="Mol. Gen. Genet.">
        <title>A multigene family in Calothrix sp. PCC 7601 encodes phycocyanin, the major component of the cyanobacterial light harvesting antenna.</title>
        <authorList>
            <person name="Mazel D."/>
            <person name="Houmard J."/>
            <person name="Tandeau de Marsac N."/>
        </authorList>
    </citation>
    <scope>NUCLEOTIDE SEQUENCE [GENOMIC DNA]</scope>
</reference>
<reference key="2">
    <citation type="journal article" date="1989" name="Nature">
        <title>Adaptive eradication of methionine and cysteine from cyanobacterial light-harvesting proteins.</title>
        <authorList>
            <person name="Mazel D."/>
            <person name="Marliere P."/>
        </authorList>
    </citation>
    <scope>NUCLEOTIDE SEQUENCE [GENOMIC DNA]</scope>
</reference>
<protein>
    <recommendedName>
        <fullName>C-phycocyanin-3 beta subunit</fullName>
    </recommendedName>
</protein>
<evidence type="ECO:0000250" key="1"/>
<evidence type="ECO:0000250" key="2">
    <source>
        <dbReference type="UniProtKB" id="P06539"/>
    </source>
</evidence>
<evidence type="ECO:0000305" key="3"/>
<comment type="function">
    <text>Light-harvesting photosynthetic bile pigment-protein from the phycobiliprotein complex (phycobilisome, PBS). Phycocyanin is the major phycobiliprotein in the PBS rod.</text>
</comment>
<comment type="subunit">
    <text evidence="2">Heterodimer of an alpha and a beta subunit, which further assembles into trimers and the trimers into hexamers.</text>
</comment>
<comment type="subcellular location">
    <subcellularLocation>
        <location evidence="1">Cellular thylakoid membrane</location>
        <topology evidence="1">Peripheral membrane protein</topology>
        <orientation evidence="1">Cytoplasmic side</orientation>
    </subcellularLocation>
    <text evidence="1">Part of the phycobilisome rod.</text>
</comment>
<comment type="induction">
    <text>Phycocyanin-3 is expressed in red light under conditions of sulfur deprivation.</text>
</comment>
<comment type="PTM">
    <text evidence="1 2">Contains two covalently linked bilin chromophores.</text>
</comment>
<comment type="similarity">
    <text evidence="3">Belongs to the phycobiliprotein family.</text>
</comment>
<name>PHCB3_MICDP</name>
<dbReference type="EMBL" id="X06083">
    <property type="protein sequence ID" value="CAA29459.1"/>
    <property type="molecule type" value="Genomic_DNA"/>
</dbReference>
<dbReference type="SMR" id="P14877"/>
<dbReference type="GO" id="GO:0030089">
    <property type="term" value="C:phycobilisome"/>
    <property type="evidence" value="ECO:0007669"/>
    <property type="project" value="UniProtKB-KW"/>
</dbReference>
<dbReference type="GO" id="GO:0031676">
    <property type="term" value="C:plasma membrane-derived thylakoid membrane"/>
    <property type="evidence" value="ECO:0007669"/>
    <property type="project" value="UniProtKB-SubCell"/>
</dbReference>
<dbReference type="GO" id="GO:0015979">
    <property type="term" value="P:photosynthesis"/>
    <property type="evidence" value="ECO:0007669"/>
    <property type="project" value="UniProtKB-KW"/>
</dbReference>
<dbReference type="CDD" id="cd14768">
    <property type="entry name" value="PC_PEC_beta"/>
    <property type="match status" value="1"/>
</dbReference>
<dbReference type="Gene3D" id="1.10.490.20">
    <property type="entry name" value="Phycocyanins"/>
    <property type="match status" value="1"/>
</dbReference>
<dbReference type="InterPro" id="IPR009050">
    <property type="entry name" value="Globin-like_sf"/>
</dbReference>
<dbReference type="InterPro" id="IPR012128">
    <property type="entry name" value="Phycobilisome_asu/bsu"/>
</dbReference>
<dbReference type="InterPro" id="IPR038719">
    <property type="entry name" value="Phycobilisome_asu/bsu_sf"/>
</dbReference>
<dbReference type="InterPro" id="IPR006247">
    <property type="entry name" value="Phycocyanin_b"/>
</dbReference>
<dbReference type="NCBIfam" id="TIGR01339">
    <property type="entry name" value="phycocy_beta"/>
    <property type="match status" value="1"/>
</dbReference>
<dbReference type="PANTHER" id="PTHR34011:SF7">
    <property type="entry name" value="C-PHYCOCYANIN BETA SUBUNIT"/>
    <property type="match status" value="1"/>
</dbReference>
<dbReference type="PANTHER" id="PTHR34011">
    <property type="entry name" value="PHYCOBILISOME 32.1 KDA LINKER POLYPEPTIDE, PHYCOCYANIN-ASSOCIATED, ROD 2-RELATED"/>
    <property type="match status" value="1"/>
</dbReference>
<dbReference type="Pfam" id="PF00502">
    <property type="entry name" value="Phycobilisome"/>
    <property type="match status" value="1"/>
</dbReference>
<dbReference type="PIRSF" id="PIRSF000081">
    <property type="entry name" value="Phycocyanin"/>
    <property type="match status" value="1"/>
</dbReference>
<dbReference type="SUPFAM" id="SSF46458">
    <property type="entry name" value="Globin-like"/>
    <property type="match status" value="1"/>
</dbReference>